<sequence length="87" mass="9789">MANIKSAKKRAVQSEKRRKHNASRRSMVRTFIKKVYAAIAAGDKDAAQKAFNEMQPIVDRQSCKGLIHKNKAARHKSNLVAQINAMQ</sequence>
<protein>
    <recommendedName>
        <fullName evidence="1">Small ribosomal subunit protein bS20</fullName>
    </recommendedName>
    <alternativeName>
        <fullName evidence="3">30S ribosomal protein S20</fullName>
    </alternativeName>
</protein>
<dbReference type="EMBL" id="CP000901">
    <property type="protein sequence ID" value="ABX87796.1"/>
    <property type="molecule type" value="Genomic_DNA"/>
</dbReference>
<dbReference type="RefSeq" id="WP_002220715.1">
    <property type="nucleotide sequence ID" value="NZ_CP009935.1"/>
</dbReference>
<dbReference type="SMR" id="A9R010"/>
<dbReference type="GeneID" id="97457675"/>
<dbReference type="KEGG" id="ypg:YpAngola_A0792"/>
<dbReference type="PATRIC" id="fig|349746.12.peg.1740"/>
<dbReference type="GO" id="GO:0005829">
    <property type="term" value="C:cytosol"/>
    <property type="evidence" value="ECO:0007669"/>
    <property type="project" value="TreeGrafter"/>
</dbReference>
<dbReference type="GO" id="GO:0015935">
    <property type="term" value="C:small ribosomal subunit"/>
    <property type="evidence" value="ECO:0007669"/>
    <property type="project" value="TreeGrafter"/>
</dbReference>
<dbReference type="GO" id="GO:0070181">
    <property type="term" value="F:small ribosomal subunit rRNA binding"/>
    <property type="evidence" value="ECO:0007669"/>
    <property type="project" value="TreeGrafter"/>
</dbReference>
<dbReference type="GO" id="GO:0003735">
    <property type="term" value="F:structural constituent of ribosome"/>
    <property type="evidence" value="ECO:0007669"/>
    <property type="project" value="InterPro"/>
</dbReference>
<dbReference type="GO" id="GO:0006412">
    <property type="term" value="P:translation"/>
    <property type="evidence" value="ECO:0007669"/>
    <property type="project" value="UniProtKB-UniRule"/>
</dbReference>
<dbReference type="FunFam" id="1.20.58.110:FF:000001">
    <property type="entry name" value="30S ribosomal protein S20"/>
    <property type="match status" value="1"/>
</dbReference>
<dbReference type="Gene3D" id="1.20.58.110">
    <property type="entry name" value="Ribosomal protein S20"/>
    <property type="match status" value="1"/>
</dbReference>
<dbReference type="HAMAP" id="MF_00500">
    <property type="entry name" value="Ribosomal_bS20"/>
    <property type="match status" value="1"/>
</dbReference>
<dbReference type="InterPro" id="IPR002583">
    <property type="entry name" value="Ribosomal_bS20"/>
</dbReference>
<dbReference type="InterPro" id="IPR036510">
    <property type="entry name" value="Ribosomal_bS20_sf"/>
</dbReference>
<dbReference type="NCBIfam" id="TIGR00029">
    <property type="entry name" value="S20"/>
    <property type="match status" value="1"/>
</dbReference>
<dbReference type="PANTHER" id="PTHR33398">
    <property type="entry name" value="30S RIBOSOMAL PROTEIN S20"/>
    <property type="match status" value="1"/>
</dbReference>
<dbReference type="PANTHER" id="PTHR33398:SF1">
    <property type="entry name" value="SMALL RIBOSOMAL SUBUNIT PROTEIN BS20C"/>
    <property type="match status" value="1"/>
</dbReference>
<dbReference type="Pfam" id="PF01649">
    <property type="entry name" value="Ribosomal_S20p"/>
    <property type="match status" value="1"/>
</dbReference>
<dbReference type="SUPFAM" id="SSF46992">
    <property type="entry name" value="Ribosomal protein S20"/>
    <property type="match status" value="1"/>
</dbReference>
<proteinExistence type="inferred from homology"/>
<comment type="function">
    <text evidence="1">Binds directly to 16S ribosomal RNA.</text>
</comment>
<comment type="similarity">
    <text evidence="1">Belongs to the bacterial ribosomal protein bS20 family.</text>
</comment>
<keyword id="KW-0687">Ribonucleoprotein</keyword>
<keyword id="KW-0689">Ribosomal protein</keyword>
<keyword id="KW-0694">RNA-binding</keyword>
<keyword id="KW-0699">rRNA-binding</keyword>
<gene>
    <name evidence="1" type="primary">rpsT</name>
    <name type="ordered locus">YpAngola_A0792</name>
</gene>
<reference key="1">
    <citation type="journal article" date="2010" name="J. Bacteriol.">
        <title>Genome sequence of the deep-rooted Yersinia pestis strain Angola reveals new insights into the evolution and pangenome of the plague bacterium.</title>
        <authorList>
            <person name="Eppinger M."/>
            <person name="Worsham P.L."/>
            <person name="Nikolich M.P."/>
            <person name="Riley D.R."/>
            <person name="Sebastian Y."/>
            <person name="Mou S."/>
            <person name="Achtman M."/>
            <person name="Lindler L.E."/>
            <person name="Ravel J."/>
        </authorList>
    </citation>
    <scope>NUCLEOTIDE SEQUENCE [LARGE SCALE GENOMIC DNA]</scope>
    <source>
        <strain>Angola</strain>
    </source>
</reference>
<organism>
    <name type="scientific">Yersinia pestis bv. Antiqua (strain Angola)</name>
    <dbReference type="NCBI Taxonomy" id="349746"/>
    <lineage>
        <taxon>Bacteria</taxon>
        <taxon>Pseudomonadati</taxon>
        <taxon>Pseudomonadota</taxon>
        <taxon>Gammaproteobacteria</taxon>
        <taxon>Enterobacterales</taxon>
        <taxon>Yersiniaceae</taxon>
        <taxon>Yersinia</taxon>
    </lineage>
</organism>
<name>RS20_YERPG</name>
<evidence type="ECO:0000255" key="1">
    <source>
        <dbReference type="HAMAP-Rule" id="MF_00500"/>
    </source>
</evidence>
<evidence type="ECO:0000256" key="2">
    <source>
        <dbReference type="SAM" id="MobiDB-lite"/>
    </source>
</evidence>
<evidence type="ECO:0000305" key="3"/>
<accession>A9R010</accession>
<feature type="chain" id="PRO_1000126538" description="Small ribosomal subunit protein bS20">
    <location>
        <begin position="1"/>
        <end position="87"/>
    </location>
</feature>
<feature type="region of interest" description="Disordered" evidence="2">
    <location>
        <begin position="1"/>
        <end position="25"/>
    </location>
</feature>